<reference key="1">
    <citation type="journal article" date="2006" name="Chem. Biol. Drug Des.">
        <title>Novel O-superfamily conotoxins identified by cDNA cloning from three vermivorous Conus species.</title>
        <authorList>
            <person name="Zhangsun D."/>
            <person name="Luo S."/>
            <person name="Wu Y."/>
            <person name="Zhu X."/>
            <person name="Hu Y."/>
            <person name="Xie L."/>
        </authorList>
    </citation>
    <scope>NUCLEOTIDE SEQUENCE [MRNA]</scope>
    <source>
        <tissue>Venom duct</tissue>
    </source>
</reference>
<feature type="signal peptide" evidence="2">
    <location>
        <begin position="1"/>
        <end position="22"/>
    </location>
</feature>
<feature type="propeptide" id="PRO_0000315478" evidence="1">
    <location>
        <begin position="23"/>
        <end position="45"/>
    </location>
</feature>
<feature type="peptide" id="PRO_0000315479" description="Conotoxin Bt6.5">
    <location>
        <begin position="48"/>
        <end position="80"/>
    </location>
</feature>
<feature type="disulfide bond" evidence="1">
    <location>
        <begin position="48"/>
        <end position="62"/>
    </location>
</feature>
<feature type="disulfide bond" evidence="1">
    <location>
        <begin position="55"/>
        <end position="66"/>
    </location>
</feature>
<feature type="disulfide bond" evidence="1">
    <location>
        <begin position="61"/>
        <end position="73"/>
    </location>
</feature>
<proteinExistence type="evidence at transcript level"/>
<protein>
    <recommendedName>
        <fullName evidence="4">Conotoxin Bt6.5</fullName>
    </recommendedName>
    <alternativeName>
        <fullName evidence="3">Conotoxin BeB42</fullName>
    </alternativeName>
</protein>
<organism>
    <name type="scientific">Conus betulinus</name>
    <name type="common">Beech cone</name>
    <dbReference type="NCBI Taxonomy" id="89764"/>
    <lineage>
        <taxon>Eukaryota</taxon>
        <taxon>Metazoa</taxon>
        <taxon>Spiralia</taxon>
        <taxon>Lophotrochozoa</taxon>
        <taxon>Mollusca</taxon>
        <taxon>Gastropoda</taxon>
        <taxon>Caenogastropoda</taxon>
        <taxon>Neogastropoda</taxon>
        <taxon>Conoidea</taxon>
        <taxon>Conidae</taxon>
        <taxon>Conus</taxon>
        <taxon>Dendroconus</taxon>
    </lineage>
</organism>
<evidence type="ECO:0000250" key="1"/>
<evidence type="ECO:0000255" key="2"/>
<evidence type="ECO:0000303" key="3">
    <source>
    </source>
</evidence>
<evidence type="ECO:0000305" key="4"/>
<name>O165_CONBE</name>
<keyword id="KW-0165">Cleavage on pair of basic residues</keyword>
<keyword id="KW-1015">Disulfide bond</keyword>
<keyword id="KW-0960">Knottin</keyword>
<keyword id="KW-0528">Neurotoxin</keyword>
<keyword id="KW-0964">Secreted</keyword>
<keyword id="KW-0732">Signal</keyword>
<keyword id="KW-0800">Toxin</keyword>
<accession>Q3YEG7</accession>
<comment type="function">
    <text evidence="1">When injected intracranially in mice, induces a series of symptoms such as quivering, climbing, scratching, barrel rolling and paralysis of limbs. Unexpectedly, no effect is observed on ionic currents when tested on locust DUM neuron (By similarity).</text>
</comment>
<comment type="subcellular location">
    <subcellularLocation>
        <location evidence="1">Secreted</location>
    </subcellularLocation>
</comment>
<comment type="tissue specificity">
    <text>Expressed by the venom duct.</text>
</comment>
<comment type="domain">
    <text evidence="1">The presence of a 'disulfide through disulfide knot' structurally defines this protein as a knottin.</text>
</comment>
<comment type="domain">
    <text>The cysteine framework is VI/VII (C-C-CC-C-C).</text>
</comment>
<comment type="similarity">
    <text evidence="4">Belongs to the conotoxin O1 superfamily.</text>
</comment>
<sequence>MKLTCVLIIAVLFLTACQLATAKTYSTGRQKHRALRSTDKNIKLSRRCNDPGGSCTRHYHCCQLYCNKQESVCLENEPAF</sequence>
<dbReference type="EMBL" id="DQ141146">
    <property type="protein sequence ID" value="AAZ83782.1"/>
    <property type="molecule type" value="mRNA"/>
</dbReference>
<dbReference type="SMR" id="Q3YEG7"/>
<dbReference type="ConoServer" id="1134">
    <property type="toxin name" value="BeB42 precursor"/>
</dbReference>
<dbReference type="GO" id="GO:0005576">
    <property type="term" value="C:extracellular region"/>
    <property type="evidence" value="ECO:0007669"/>
    <property type="project" value="UniProtKB-SubCell"/>
</dbReference>
<dbReference type="GO" id="GO:0008200">
    <property type="term" value="F:ion channel inhibitor activity"/>
    <property type="evidence" value="ECO:0007669"/>
    <property type="project" value="InterPro"/>
</dbReference>
<dbReference type="GO" id="GO:0090729">
    <property type="term" value="F:toxin activity"/>
    <property type="evidence" value="ECO:0007669"/>
    <property type="project" value="UniProtKB-KW"/>
</dbReference>
<dbReference type="InterPro" id="IPR004214">
    <property type="entry name" value="Conotoxin"/>
</dbReference>
<dbReference type="Pfam" id="PF02950">
    <property type="entry name" value="Conotoxin"/>
    <property type="match status" value="1"/>
</dbReference>